<proteinExistence type="inferred from homology"/>
<keyword id="KW-0068">Autocatalytic cleavage</keyword>
<keyword id="KW-0963">Cytoplasm</keyword>
<keyword id="KW-0210">Decarboxylase</keyword>
<keyword id="KW-0456">Lyase</keyword>
<keyword id="KW-0566">Pantothenate biosynthesis</keyword>
<keyword id="KW-0670">Pyruvate</keyword>
<keyword id="KW-1185">Reference proteome</keyword>
<keyword id="KW-0704">Schiff base</keyword>
<keyword id="KW-0865">Zymogen</keyword>
<reference key="1">
    <citation type="journal article" date="2008" name="J. Bacteriol.">
        <title>Insights into plant cell wall degradation from the genome sequence of the soil bacterium Cellvibrio japonicus.</title>
        <authorList>
            <person name="DeBoy R.T."/>
            <person name="Mongodin E.F."/>
            <person name="Fouts D.E."/>
            <person name="Tailford L.E."/>
            <person name="Khouri H."/>
            <person name="Emerson J.B."/>
            <person name="Mohamoud Y."/>
            <person name="Watkins K."/>
            <person name="Henrissat B."/>
            <person name="Gilbert H.J."/>
            <person name="Nelson K.E."/>
        </authorList>
    </citation>
    <scope>NUCLEOTIDE SEQUENCE [LARGE SCALE GENOMIC DNA]</scope>
    <source>
        <strain>Ueda107</strain>
    </source>
</reference>
<feature type="chain" id="PRO_1000191944" description="Aspartate 1-decarboxylase beta chain" evidence="1">
    <location>
        <begin position="1"/>
        <end position="24"/>
    </location>
</feature>
<feature type="chain" id="PRO_1000191945" description="Aspartate 1-decarboxylase alpha chain" evidence="1">
    <location>
        <begin position="25"/>
        <end position="126"/>
    </location>
</feature>
<feature type="active site" description="Schiff-base intermediate with substrate; via pyruvic acid" evidence="1">
    <location>
        <position position="25"/>
    </location>
</feature>
<feature type="active site" description="Proton donor" evidence="1">
    <location>
        <position position="58"/>
    </location>
</feature>
<feature type="binding site" evidence="1">
    <location>
        <position position="57"/>
    </location>
    <ligand>
        <name>substrate</name>
    </ligand>
</feature>
<feature type="binding site" evidence="1">
    <location>
        <begin position="73"/>
        <end position="75"/>
    </location>
    <ligand>
        <name>substrate</name>
    </ligand>
</feature>
<feature type="modified residue" description="Pyruvic acid (Ser)" evidence="1">
    <location>
        <position position="25"/>
    </location>
</feature>
<evidence type="ECO:0000255" key="1">
    <source>
        <dbReference type="HAMAP-Rule" id="MF_00446"/>
    </source>
</evidence>
<dbReference type="EC" id="4.1.1.11" evidence="1"/>
<dbReference type="EMBL" id="CP000934">
    <property type="protein sequence ID" value="ACE84004.1"/>
    <property type="molecule type" value="Genomic_DNA"/>
</dbReference>
<dbReference type="RefSeq" id="WP_012488555.1">
    <property type="nucleotide sequence ID" value="NC_010995.1"/>
</dbReference>
<dbReference type="SMR" id="B3PCR4"/>
<dbReference type="STRING" id="498211.CJA_2974"/>
<dbReference type="KEGG" id="cja:CJA_2974"/>
<dbReference type="eggNOG" id="COG0853">
    <property type="taxonomic scope" value="Bacteria"/>
</dbReference>
<dbReference type="HOGENOM" id="CLU_115305_2_1_6"/>
<dbReference type="OrthoDB" id="9803983at2"/>
<dbReference type="UniPathway" id="UPA00028">
    <property type="reaction ID" value="UER00002"/>
</dbReference>
<dbReference type="Proteomes" id="UP000001036">
    <property type="component" value="Chromosome"/>
</dbReference>
<dbReference type="GO" id="GO:0005829">
    <property type="term" value="C:cytosol"/>
    <property type="evidence" value="ECO:0007669"/>
    <property type="project" value="TreeGrafter"/>
</dbReference>
<dbReference type="GO" id="GO:0004068">
    <property type="term" value="F:aspartate 1-decarboxylase activity"/>
    <property type="evidence" value="ECO:0007669"/>
    <property type="project" value="UniProtKB-UniRule"/>
</dbReference>
<dbReference type="GO" id="GO:0006523">
    <property type="term" value="P:alanine biosynthetic process"/>
    <property type="evidence" value="ECO:0007669"/>
    <property type="project" value="InterPro"/>
</dbReference>
<dbReference type="GO" id="GO:0015940">
    <property type="term" value="P:pantothenate biosynthetic process"/>
    <property type="evidence" value="ECO:0007669"/>
    <property type="project" value="UniProtKB-UniRule"/>
</dbReference>
<dbReference type="CDD" id="cd06919">
    <property type="entry name" value="Asp_decarbox"/>
    <property type="match status" value="1"/>
</dbReference>
<dbReference type="Gene3D" id="2.40.40.20">
    <property type="match status" value="1"/>
</dbReference>
<dbReference type="HAMAP" id="MF_00446">
    <property type="entry name" value="PanD"/>
    <property type="match status" value="1"/>
</dbReference>
<dbReference type="InterPro" id="IPR009010">
    <property type="entry name" value="Asp_de-COase-like_dom_sf"/>
</dbReference>
<dbReference type="InterPro" id="IPR003190">
    <property type="entry name" value="Asp_decarbox"/>
</dbReference>
<dbReference type="NCBIfam" id="TIGR00223">
    <property type="entry name" value="panD"/>
    <property type="match status" value="1"/>
</dbReference>
<dbReference type="PANTHER" id="PTHR21012">
    <property type="entry name" value="ASPARTATE 1-DECARBOXYLASE"/>
    <property type="match status" value="1"/>
</dbReference>
<dbReference type="PANTHER" id="PTHR21012:SF0">
    <property type="entry name" value="ASPARTATE 1-DECARBOXYLASE"/>
    <property type="match status" value="1"/>
</dbReference>
<dbReference type="Pfam" id="PF02261">
    <property type="entry name" value="Asp_decarbox"/>
    <property type="match status" value="1"/>
</dbReference>
<dbReference type="PIRSF" id="PIRSF006246">
    <property type="entry name" value="Asp_decarbox"/>
    <property type="match status" value="1"/>
</dbReference>
<dbReference type="SUPFAM" id="SSF50692">
    <property type="entry name" value="ADC-like"/>
    <property type="match status" value="1"/>
</dbReference>
<sequence length="126" mass="13849">MLSHMLKAKLHMAKVTQAELWYDGSCAIDADLVALAGMREFEQIDIYNVSNGERFHTYIILAEPGSGTISMNGAAARKVAVGDRVIIATYGHFTEAELLNHKPKLVYLNENNGVERTSNAIPMQVA</sequence>
<accession>B3PCR4</accession>
<name>PAND_CELJU</name>
<gene>
    <name evidence="1" type="primary">panD</name>
    <name type="ordered locus">CJA_2974</name>
</gene>
<protein>
    <recommendedName>
        <fullName evidence="1">Aspartate 1-decarboxylase</fullName>
        <ecNumber evidence="1">4.1.1.11</ecNumber>
    </recommendedName>
    <alternativeName>
        <fullName evidence="1">Aspartate alpha-decarboxylase</fullName>
    </alternativeName>
    <component>
        <recommendedName>
            <fullName evidence="1">Aspartate 1-decarboxylase beta chain</fullName>
        </recommendedName>
    </component>
    <component>
        <recommendedName>
            <fullName evidence="1">Aspartate 1-decarboxylase alpha chain</fullName>
        </recommendedName>
    </component>
</protein>
<comment type="function">
    <text evidence="1">Catalyzes the pyruvoyl-dependent decarboxylation of aspartate to produce beta-alanine.</text>
</comment>
<comment type="catalytic activity">
    <reaction evidence="1">
        <text>L-aspartate + H(+) = beta-alanine + CO2</text>
        <dbReference type="Rhea" id="RHEA:19497"/>
        <dbReference type="ChEBI" id="CHEBI:15378"/>
        <dbReference type="ChEBI" id="CHEBI:16526"/>
        <dbReference type="ChEBI" id="CHEBI:29991"/>
        <dbReference type="ChEBI" id="CHEBI:57966"/>
        <dbReference type="EC" id="4.1.1.11"/>
    </reaction>
</comment>
<comment type="cofactor">
    <cofactor evidence="1">
        <name>pyruvate</name>
        <dbReference type="ChEBI" id="CHEBI:15361"/>
    </cofactor>
    <text evidence="1">Binds 1 pyruvoyl group covalently per subunit.</text>
</comment>
<comment type="pathway">
    <text evidence="1">Cofactor biosynthesis; (R)-pantothenate biosynthesis; beta-alanine from L-aspartate: step 1/1.</text>
</comment>
<comment type="subunit">
    <text evidence="1">Heterooctamer of four alpha and four beta subunits.</text>
</comment>
<comment type="subcellular location">
    <subcellularLocation>
        <location evidence="1">Cytoplasm</location>
    </subcellularLocation>
</comment>
<comment type="PTM">
    <text evidence="1">Is synthesized initially as an inactive proenzyme, which is activated by self-cleavage at a specific serine bond to produce a beta-subunit with a hydroxyl group at its C-terminus and an alpha-subunit with a pyruvoyl group at its N-terminus.</text>
</comment>
<comment type="similarity">
    <text evidence="1">Belongs to the PanD family.</text>
</comment>
<organism>
    <name type="scientific">Cellvibrio japonicus (strain Ueda107)</name>
    <name type="common">Pseudomonas fluorescens subsp. cellulosa</name>
    <dbReference type="NCBI Taxonomy" id="498211"/>
    <lineage>
        <taxon>Bacteria</taxon>
        <taxon>Pseudomonadati</taxon>
        <taxon>Pseudomonadota</taxon>
        <taxon>Gammaproteobacteria</taxon>
        <taxon>Cellvibrionales</taxon>
        <taxon>Cellvibrionaceae</taxon>
        <taxon>Cellvibrio</taxon>
    </lineage>
</organism>